<feature type="chain" id="PRO_1000121134" description="DNA replication and repair protein RecF">
    <location>
        <begin position="1"/>
        <end position="386"/>
    </location>
</feature>
<feature type="binding site" evidence="1">
    <location>
        <begin position="30"/>
        <end position="37"/>
    </location>
    <ligand>
        <name>ATP</name>
        <dbReference type="ChEBI" id="CHEBI:30616"/>
    </ligand>
</feature>
<dbReference type="EMBL" id="CP001034">
    <property type="protein sequence ID" value="ACB83603.1"/>
    <property type="molecule type" value="Genomic_DNA"/>
</dbReference>
<dbReference type="RefSeq" id="WP_012446494.1">
    <property type="nucleotide sequence ID" value="NC_010718.1"/>
</dbReference>
<dbReference type="SMR" id="B2A2Y9"/>
<dbReference type="FunCoup" id="B2A2Y9">
    <property type="interactions" value="226"/>
</dbReference>
<dbReference type="STRING" id="457570.Nther_0004"/>
<dbReference type="KEGG" id="nth:Nther_0004"/>
<dbReference type="eggNOG" id="COG1195">
    <property type="taxonomic scope" value="Bacteria"/>
</dbReference>
<dbReference type="HOGENOM" id="CLU_040267_0_1_9"/>
<dbReference type="InParanoid" id="B2A2Y9"/>
<dbReference type="OrthoDB" id="9803889at2"/>
<dbReference type="Proteomes" id="UP000001683">
    <property type="component" value="Chromosome"/>
</dbReference>
<dbReference type="GO" id="GO:0005737">
    <property type="term" value="C:cytoplasm"/>
    <property type="evidence" value="ECO:0007669"/>
    <property type="project" value="UniProtKB-SubCell"/>
</dbReference>
<dbReference type="GO" id="GO:0005524">
    <property type="term" value="F:ATP binding"/>
    <property type="evidence" value="ECO:0007669"/>
    <property type="project" value="UniProtKB-UniRule"/>
</dbReference>
<dbReference type="GO" id="GO:0003697">
    <property type="term" value="F:single-stranded DNA binding"/>
    <property type="evidence" value="ECO:0007669"/>
    <property type="project" value="UniProtKB-UniRule"/>
</dbReference>
<dbReference type="GO" id="GO:0006260">
    <property type="term" value="P:DNA replication"/>
    <property type="evidence" value="ECO:0007669"/>
    <property type="project" value="UniProtKB-UniRule"/>
</dbReference>
<dbReference type="GO" id="GO:0000731">
    <property type="term" value="P:DNA synthesis involved in DNA repair"/>
    <property type="evidence" value="ECO:0007669"/>
    <property type="project" value="TreeGrafter"/>
</dbReference>
<dbReference type="GO" id="GO:0006302">
    <property type="term" value="P:double-strand break repair"/>
    <property type="evidence" value="ECO:0007669"/>
    <property type="project" value="TreeGrafter"/>
</dbReference>
<dbReference type="GO" id="GO:0009432">
    <property type="term" value="P:SOS response"/>
    <property type="evidence" value="ECO:0007669"/>
    <property type="project" value="UniProtKB-UniRule"/>
</dbReference>
<dbReference type="CDD" id="cd03242">
    <property type="entry name" value="ABC_RecF"/>
    <property type="match status" value="1"/>
</dbReference>
<dbReference type="Gene3D" id="3.40.50.300">
    <property type="entry name" value="P-loop containing nucleotide triphosphate hydrolases"/>
    <property type="match status" value="1"/>
</dbReference>
<dbReference type="Gene3D" id="1.20.1050.90">
    <property type="entry name" value="RecF/RecN/SMC, N-terminal domain"/>
    <property type="match status" value="1"/>
</dbReference>
<dbReference type="HAMAP" id="MF_00365">
    <property type="entry name" value="RecF"/>
    <property type="match status" value="1"/>
</dbReference>
<dbReference type="InterPro" id="IPR001238">
    <property type="entry name" value="DNA-binding_RecF"/>
</dbReference>
<dbReference type="InterPro" id="IPR018078">
    <property type="entry name" value="DNA-binding_RecF_CS"/>
</dbReference>
<dbReference type="InterPro" id="IPR027417">
    <property type="entry name" value="P-loop_NTPase"/>
</dbReference>
<dbReference type="InterPro" id="IPR003395">
    <property type="entry name" value="RecF/RecN/SMC_N"/>
</dbReference>
<dbReference type="InterPro" id="IPR042174">
    <property type="entry name" value="RecF_2"/>
</dbReference>
<dbReference type="NCBIfam" id="TIGR00611">
    <property type="entry name" value="recf"/>
    <property type="match status" value="1"/>
</dbReference>
<dbReference type="PANTHER" id="PTHR32182">
    <property type="entry name" value="DNA REPLICATION AND REPAIR PROTEIN RECF"/>
    <property type="match status" value="1"/>
</dbReference>
<dbReference type="PANTHER" id="PTHR32182:SF0">
    <property type="entry name" value="DNA REPLICATION AND REPAIR PROTEIN RECF"/>
    <property type="match status" value="1"/>
</dbReference>
<dbReference type="Pfam" id="PF02463">
    <property type="entry name" value="SMC_N"/>
    <property type="match status" value="1"/>
</dbReference>
<dbReference type="SUPFAM" id="SSF52540">
    <property type="entry name" value="P-loop containing nucleoside triphosphate hydrolases"/>
    <property type="match status" value="1"/>
</dbReference>
<dbReference type="PROSITE" id="PS00617">
    <property type="entry name" value="RECF_1"/>
    <property type="match status" value="1"/>
</dbReference>
<dbReference type="PROSITE" id="PS00618">
    <property type="entry name" value="RECF_2"/>
    <property type="match status" value="1"/>
</dbReference>
<protein>
    <recommendedName>
        <fullName evidence="1">DNA replication and repair protein RecF</fullName>
    </recommendedName>
</protein>
<gene>
    <name evidence="1" type="primary">recF</name>
    <name type="ordered locus">Nther_0004</name>
</gene>
<sequence>MKLTELCLKNFRNYSNLKLNFKKPIILFFGANAQGKTNLLEAIYYLATGKSHRAQKEKELIRWETSGFYLKGELEKEQAQYTLEIITNYQNGKNKNLKVNNLSQTNTRNFLKTMNVVIFSPEDLMLVKGTPDNRRRFIDQEITQVDPSYDFYLKNYFKALRQRNKLLKTYQDKNTLAQHLPPWNQQLVHYGSKIILKREEVIHKIRLLARLIYRKITNQTENLELDYSPSLEFEDCKFREQLSGEKLAHKFLNTLNENLQSDIEKRTTSIGPHRDDLIFKINNKDARQFGSQGQQRTTVLALKMAELEMIKGEKGEFPILLLDDVLSELDDNRKKHLLNLTEGRVQTFVTSTSMEDFNGDVDIKAKSQVFRIDNGEAVKLNAGNQE</sequence>
<accession>B2A2Y9</accession>
<organism>
    <name type="scientific">Natranaerobius thermophilus (strain ATCC BAA-1301 / DSM 18059 / JW/NM-WN-LF)</name>
    <dbReference type="NCBI Taxonomy" id="457570"/>
    <lineage>
        <taxon>Bacteria</taxon>
        <taxon>Bacillati</taxon>
        <taxon>Bacillota</taxon>
        <taxon>Clostridia</taxon>
        <taxon>Natranaerobiales</taxon>
        <taxon>Natranaerobiaceae</taxon>
        <taxon>Natranaerobius</taxon>
    </lineage>
</organism>
<name>RECF_NATTJ</name>
<evidence type="ECO:0000255" key="1">
    <source>
        <dbReference type="HAMAP-Rule" id="MF_00365"/>
    </source>
</evidence>
<reference key="1">
    <citation type="submission" date="2008-04" db="EMBL/GenBank/DDBJ databases">
        <title>Complete sequence of chromosome of Natranaerobius thermophilus JW/NM-WN-LF.</title>
        <authorList>
            <consortium name="US DOE Joint Genome Institute"/>
            <person name="Copeland A."/>
            <person name="Lucas S."/>
            <person name="Lapidus A."/>
            <person name="Glavina del Rio T."/>
            <person name="Dalin E."/>
            <person name="Tice H."/>
            <person name="Bruce D."/>
            <person name="Goodwin L."/>
            <person name="Pitluck S."/>
            <person name="Chertkov O."/>
            <person name="Brettin T."/>
            <person name="Detter J.C."/>
            <person name="Han C."/>
            <person name="Kuske C.R."/>
            <person name="Schmutz J."/>
            <person name="Larimer F."/>
            <person name="Land M."/>
            <person name="Hauser L."/>
            <person name="Kyrpides N."/>
            <person name="Lykidis A."/>
            <person name="Mesbah N.M."/>
            <person name="Wiegel J."/>
        </authorList>
    </citation>
    <scope>NUCLEOTIDE SEQUENCE [LARGE SCALE GENOMIC DNA]</scope>
    <source>
        <strain>ATCC BAA-1301 / DSM 18059 / JW/NM-WN-LF</strain>
    </source>
</reference>
<proteinExistence type="inferred from homology"/>
<keyword id="KW-0067">ATP-binding</keyword>
<keyword id="KW-0963">Cytoplasm</keyword>
<keyword id="KW-0227">DNA damage</keyword>
<keyword id="KW-0234">DNA repair</keyword>
<keyword id="KW-0235">DNA replication</keyword>
<keyword id="KW-0238">DNA-binding</keyword>
<keyword id="KW-0547">Nucleotide-binding</keyword>
<keyword id="KW-1185">Reference proteome</keyword>
<keyword id="KW-0742">SOS response</keyword>
<comment type="function">
    <text evidence="1">The RecF protein is involved in DNA metabolism; it is required for DNA replication and normal SOS inducibility. RecF binds preferentially to single-stranded, linear DNA. It also seems to bind ATP.</text>
</comment>
<comment type="subcellular location">
    <subcellularLocation>
        <location evidence="1">Cytoplasm</location>
    </subcellularLocation>
</comment>
<comment type="similarity">
    <text evidence="1">Belongs to the RecF family.</text>
</comment>